<name>DXS_NEIMF</name>
<accession>A1KS32</accession>
<gene>
    <name evidence="1" type="primary">dxs</name>
    <name type="ordered locus">NMC0352</name>
</gene>
<proteinExistence type="inferred from homology"/>
<protein>
    <recommendedName>
        <fullName evidence="1">1-deoxy-D-xylulose-5-phosphate synthase</fullName>
        <ecNumber evidence="1">2.2.1.7</ecNumber>
    </recommendedName>
    <alternativeName>
        <fullName evidence="1">1-deoxyxylulose-5-phosphate synthase</fullName>
        <shortName evidence="1">DXP synthase</shortName>
        <shortName evidence="1">DXPS</shortName>
    </alternativeName>
</protein>
<reference key="1">
    <citation type="journal article" date="2007" name="PLoS Genet.">
        <title>Meningococcal genetic variation mechanisms viewed through comparative analysis of serogroup C strain FAM18.</title>
        <authorList>
            <person name="Bentley S.D."/>
            <person name="Vernikos G.S."/>
            <person name="Snyder L.A.S."/>
            <person name="Churcher C."/>
            <person name="Arrowsmith C."/>
            <person name="Chillingworth T."/>
            <person name="Cronin A."/>
            <person name="Davis P.H."/>
            <person name="Holroyd N.E."/>
            <person name="Jagels K."/>
            <person name="Maddison M."/>
            <person name="Moule S."/>
            <person name="Rabbinowitsch E."/>
            <person name="Sharp S."/>
            <person name="Unwin L."/>
            <person name="Whitehead S."/>
            <person name="Quail M.A."/>
            <person name="Achtman M."/>
            <person name="Barrell B.G."/>
            <person name="Saunders N.J."/>
            <person name="Parkhill J."/>
        </authorList>
    </citation>
    <scope>NUCLEOTIDE SEQUENCE [LARGE SCALE GENOMIC DNA]</scope>
    <source>
        <strain>ATCC 700532 / DSM 15464 / FAM18</strain>
    </source>
</reference>
<organism>
    <name type="scientific">Neisseria meningitidis serogroup C / serotype 2a (strain ATCC 700532 / DSM 15464 / FAM18)</name>
    <dbReference type="NCBI Taxonomy" id="272831"/>
    <lineage>
        <taxon>Bacteria</taxon>
        <taxon>Pseudomonadati</taxon>
        <taxon>Pseudomonadota</taxon>
        <taxon>Betaproteobacteria</taxon>
        <taxon>Neisseriales</taxon>
        <taxon>Neisseriaceae</taxon>
        <taxon>Neisseria</taxon>
    </lineage>
</organism>
<feature type="chain" id="PRO_1000019048" description="1-deoxy-D-xylulose-5-phosphate synthase">
    <location>
        <begin position="1"/>
        <end position="637"/>
    </location>
</feature>
<feature type="binding site" evidence="1">
    <location>
        <position position="76"/>
    </location>
    <ligand>
        <name>thiamine diphosphate</name>
        <dbReference type="ChEBI" id="CHEBI:58937"/>
    </ligand>
</feature>
<feature type="binding site" evidence="1">
    <location>
        <begin position="117"/>
        <end position="119"/>
    </location>
    <ligand>
        <name>thiamine diphosphate</name>
        <dbReference type="ChEBI" id="CHEBI:58937"/>
    </ligand>
</feature>
<feature type="binding site" evidence="1">
    <location>
        <position position="148"/>
    </location>
    <ligand>
        <name>Mg(2+)</name>
        <dbReference type="ChEBI" id="CHEBI:18420"/>
    </ligand>
</feature>
<feature type="binding site" evidence="1">
    <location>
        <begin position="149"/>
        <end position="150"/>
    </location>
    <ligand>
        <name>thiamine diphosphate</name>
        <dbReference type="ChEBI" id="CHEBI:58937"/>
    </ligand>
</feature>
<feature type="binding site" evidence="1">
    <location>
        <position position="177"/>
    </location>
    <ligand>
        <name>Mg(2+)</name>
        <dbReference type="ChEBI" id="CHEBI:18420"/>
    </ligand>
</feature>
<feature type="binding site" evidence="1">
    <location>
        <position position="177"/>
    </location>
    <ligand>
        <name>thiamine diphosphate</name>
        <dbReference type="ChEBI" id="CHEBI:58937"/>
    </ligand>
</feature>
<feature type="binding site" evidence="1">
    <location>
        <position position="294"/>
    </location>
    <ligand>
        <name>thiamine diphosphate</name>
        <dbReference type="ChEBI" id="CHEBI:58937"/>
    </ligand>
</feature>
<feature type="binding site" evidence="1">
    <location>
        <position position="381"/>
    </location>
    <ligand>
        <name>thiamine diphosphate</name>
        <dbReference type="ChEBI" id="CHEBI:58937"/>
    </ligand>
</feature>
<keyword id="KW-0414">Isoprene biosynthesis</keyword>
<keyword id="KW-0460">Magnesium</keyword>
<keyword id="KW-0479">Metal-binding</keyword>
<keyword id="KW-0784">Thiamine biosynthesis</keyword>
<keyword id="KW-0786">Thiamine pyrophosphate</keyword>
<keyword id="KW-0808">Transferase</keyword>
<dbReference type="EC" id="2.2.1.7" evidence="1"/>
<dbReference type="EMBL" id="AM421808">
    <property type="protein sequence ID" value="CAM09662.1"/>
    <property type="molecule type" value="Genomic_DNA"/>
</dbReference>
<dbReference type="RefSeq" id="WP_002248133.1">
    <property type="nucleotide sequence ID" value="NC_008767.1"/>
</dbReference>
<dbReference type="SMR" id="A1KS32"/>
<dbReference type="KEGG" id="nmc:NMC0352"/>
<dbReference type="HOGENOM" id="CLU_009227_1_4_4"/>
<dbReference type="UniPathway" id="UPA00064">
    <property type="reaction ID" value="UER00091"/>
</dbReference>
<dbReference type="Proteomes" id="UP000002286">
    <property type="component" value="Chromosome"/>
</dbReference>
<dbReference type="GO" id="GO:0005829">
    <property type="term" value="C:cytosol"/>
    <property type="evidence" value="ECO:0007669"/>
    <property type="project" value="TreeGrafter"/>
</dbReference>
<dbReference type="GO" id="GO:0008661">
    <property type="term" value="F:1-deoxy-D-xylulose-5-phosphate synthase activity"/>
    <property type="evidence" value="ECO:0007669"/>
    <property type="project" value="UniProtKB-UniRule"/>
</dbReference>
<dbReference type="GO" id="GO:0000287">
    <property type="term" value="F:magnesium ion binding"/>
    <property type="evidence" value="ECO:0007669"/>
    <property type="project" value="UniProtKB-UniRule"/>
</dbReference>
<dbReference type="GO" id="GO:0030976">
    <property type="term" value="F:thiamine pyrophosphate binding"/>
    <property type="evidence" value="ECO:0007669"/>
    <property type="project" value="UniProtKB-UniRule"/>
</dbReference>
<dbReference type="GO" id="GO:0052865">
    <property type="term" value="P:1-deoxy-D-xylulose 5-phosphate biosynthetic process"/>
    <property type="evidence" value="ECO:0007669"/>
    <property type="project" value="UniProtKB-UniPathway"/>
</dbReference>
<dbReference type="GO" id="GO:0019288">
    <property type="term" value="P:isopentenyl diphosphate biosynthetic process, methylerythritol 4-phosphate pathway"/>
    <property type="evidence" value="ECO:0007669"/>
    <property type="project" value="TreeGrafter"/>
</dbReference>
<dbReference type="GO" id="GO:0016114">
    <property type="term" value="P:terpenoid biosynthetic process"/>
    <property type="evidence" value="ECO:0007669"/>
    <property type="project" value="UniProtKB-UniRule"/>
</dbReference>
<dbReference type="GO" id="GO:0009228">
    <property type="term" value="P:thiamine biosynthetic process"/>
    <property type="evidence" value="ECO:0007669"/>
    <property type="project" value="UniProtKB-UniRule"/>
</dbReference>
<dbReference type="CDD" id="cd02007">
    <property type="entry name" value="TPP_DXS"/>
    <property type="match status" value="1"/>
</dbReference>
<dbReference type="CDD" id="cd07033">
    <property type="entry name" value="TPP_PYR_DXS_TK_like"/>
    <property type="match status" value="1"/>
</dbReference>
<dbReference type="FunFam" id="3.40.50.920:FF:000002">
    <property type="entry name" value="1-deoxy-D-xylulose-5-phosphate synthase"/>
    <property type="match status" value="1"/>
</dbReference>
<dbReference type="FunFam" id="3.40.50.970:FF:000005">
    <property type="entry name" value="1-deoxy-D-xylulose-5-phosphate synthase"/>
    <property type="match status" value="1"/>
</dbReference>
<dbReference type="Gene3D" id="3.40.50.920">
    <property type="match status" value="1"/>
</dbReference>
<dbReference type="Gene3D" id="3.40.50.970">
    <property type="match status" value="2"/>
</dbReference>
<dbReference type="HAMAP" id="MF_00315">
    <property type="entry name" value="DXP_synth"/>
    <property type="match status" value="1"/>
</dbReference>
<dbReference type="InterPro" id="IPR005477">
    <property type="entry name" value="Dxylulose-5-P_synthase"/>
</dbReference>
<dbReference type="InterPro" id="IPR029061">
    <property type="entry name" value="THDP-binding"/>
</dbReference>
<dbReference type="InterPro" id="IPR009014">
    <property type="entry name" value="Transketo_C/PFOR_II"/>
</dbReference>
<dbReference type="InterPro" id="IPR005475">
    <property type="entry name" value="Transketolase-like_Pyr-bd"/>
</dbReference>
<dbReference type="InterPro" id="IPR020826">
    <property type="entry name" value="Transketolase_BS"/>
</dbReference>
<dbReference type="InterPro" id="IPR033248">
    <property type="entry name" value="Transketolase_C"/>
</dbReference>
<dbReference type="InterPro" id="IPR049557">
    <property type="entry name" value="Transketolase_CS"/>
</dbReference>
<dbReference type="NCBIfam" id="TIGR00204">
    <property type="entry name" value="dxs"/>
    <property type="match status" value="1"/>
</dbReference>
<dbReference type="NCBIfam" id="NF003933">
    <property type="entry name" value="PRK05444.2-2"/>
    <property type="match status" value="1"/>
</dbReference>
<dbReference type="PANTHER" id="PTHR43322">
    <property type="entry name" value="1-D-DEOXYXYLULOSE 5-PHOSPHATE SYNTHASE-RELATED"/>
    <property type="match status" value="1"/>
</dbReference>
<dbReference type="PANTHER" id="PTHR43322:SF5">
    <property type="entry name" value="1-DEOXY-D-XYLULOSE-5-PHOSPHATE SYNTHASE, CHLOROPLASTIC"/>
    <property type="match status" value="1"/>
</dbReference>
<dbReference type="Pfam" id="PF13292">
    <property type="entry name" value="DXP_synthase_N"/>
    <property type="match status" value="1"/>
</dbReference>
<dbReference type="Pfam" id="PF02779">
    <property type="entry name" value="Transket_pyr"/>
    <property type="match status" value="1"/>
</dbReference>
<dbReference type="Pfam" id="PF02780">
    <property type="entry name" value="Transketolase_C"/>
    <property type="match status" value="1"/>
</dbReference>
<dbReference type="SMART" id="SM00861">
    <property type="entry name" value="Transket_pyr"/>
    <property type="match status" value="1"/>
</dbReference>
<dbReference type="SUPFAM" id="SSF52518">
    <property type="entry name" value="Thiamin diphosphate-binding fold (THDP-binding)"/>
    <property type="match status" value="2"/>
</dbReference>
<dbReference type="SUPFAM" id="SSF52922">
    <property type="entry name" value="TK C-terminal domain-like"/>
    <property type="match status" value="1"/>
</dbReference>
<dbReference type="PROSITE" id="PS00801">
    <property type="entry name" value="TRANSKETOLASE_1"/>
    <property type="match status" value="1"/>
</dbReference>
<dbReference type="PROSITE" id="PS00802">
    <property type="entry name" value="TRANSKETOLASE_2"/>
    <property type="match status" value="1"/>
</dbReference>
<comment type="function">
    <text evidence="1">Catalyzes the acyloin condensation reaction between C atoms 2 and 3 of pyruvate and glyceraldehyde 3-phosphate to yield 1-deoxy-D-xylulose-5-phosphate (DXP).</text>
</comment>
<comment type="catalytic activity">
    <reaction evidence="1">
        <text>D-glyceraldehyde 3-phosphate + pyruvate + H(+) = 1-deoxy-D-xylulose 5-phosphate + CO2</text>
        <dbReference type="Rhea" id="RHEA:12605"/>
        <dbReference type="ChEBI" id="CHEBI:15361"/>
        <dbReference type="ChEBI" id="CHEBI:15378"/>
        <dbReference type="ChEBI" id="CHEBI:16526"/>
        <dbReference type="ChEBI" id="CHEBI:57792"/>
        <dbReference type="ChEBI" id="CHEBI:59776"/>
        <dbReference type="EC" id="2.2.1.7"/>
    </reaction>
</comment>
<comment type="cofactor">
    <cofactor evidence="1">
        <name>Mg(2+)</name>
        <dbReference type="ChEBI" id="CHEBI:18420"/>
    </cofactor>
    <text evidence="1">Binds 1 Mg(2+) ion per subunit.</text>
</comment>
<comment type="cofactor">
    <cofactor evidence="1">
        <name>thiamine diphosphate</name>
        <dbReference type="ChEBI" id="CHEBI:58937"/>
    </cofactor>
    <text evidence="1">Binds 1 thiamine pyrophosphate per subunit.</text>
</comment>
<comment type="pathway">
    <text evidence="1">Metabolic intermediate biosynthesis; 1-deoxy-D-xylulose 5-phosphate biosynthesis; 1-deoxy-D-xylulose 5-phosphate from D-glyceraldehyde 3-phosphate and pyruvate: step 1/1.</text>
</comment>
<comment type="subunit">
    <text evidence="1">Homodimer.</text>
</comment>
<comment type="similarity">
    <text evidence="1">Belongs to the transketolase family. DXPS subfamily.</text>
</comment>
<sequence>MNPSPLLDLIDSPQDLRRLDKKQLPRLAGELRAFLLESVGQTGGHFASNLGAVELTIALHYVYDTPEDKLVWDVGHQSYPHKILTGRKNQMHTMRQYGGLAGFPKRSESEYDAFGVGHSSTSIGAALGMAVADKQLGNNRRSVAIIGDGAMTAGQAFEALNCAGDMDVDLLVVLNDNEMSISPNVGALPKYLASNVVRDMHGLLSTVKAQTGKVLDKIPGAMEFAQKVEHKIKTLAEEAEHAKQSLSLFENFGFRYTGPVDGHNVENLVDVLKDLRSRKGPQLLHVITKKGNGYKLAENDPVKYHAVAKLPKEGAAQMPSEKEPKPVAKPTYTQVFGKWLCDRAAADERLIAITPAMREGSGLVEFEQRFPDRYFDVGIAEQHAVTFAGGLACEGMKPVVAIYSTFLQRAYDQLVHDIALQNLPVLFAVDRAGIVGADGPTHAGLYDLSFLRCIPNMIVAAPSDENECRLLLSTCYQADAPAAVRYPRGTGTGAPVSDGMETVEIGKGIIRREGGKTAFIAFGSMVAPALAVAGKLNATVADMRFVKPIDEELIVRLARSHDRIVTLEENAEQGGAGGAVLEVLAKHGICKPVLLLGVADTVTGHGDPKKLLDDLGLSAEAVERRVRAWLSDRDAAN</sequence>
<evidence type="ECO:0000255" key="1">
    <source>
        <dbReference type="HAMAP-Rule" id="MF_00315"/>
    </source>
</evidence>